<keyword id="KW-0963">Cytoplasm</keyword>
<keyword id="KW-0396">Initiation factor</keyword>
<keyword id="KW-0648">Protein biosynthesis</keyword>
<keyword id="KW-1185">Reference proteome</keyword>
<keyword id="KW-0677">Repeat</keyword>
<keyword id="KW-0694">RNA-binding</keyword>
<keyword id="KW-0853">WD repeat</keyword>
<gene>
    <name evidence="1" type="primary">PRT1</name>
    <name type="ordered locus">KLLA0A03531g</name>
</gene>
<name>EIF3B_KLULA</name>
<dbReference type="EMBL" id="CR382121">
    <property type="protein sequence ID" value="CAH02743.1"/>
    <property type="molecule type" value="Genomic_DNA"/>
</dbReference>
<dbReference type="RefSeq" id="XP_451155.1">
    <property type="nucleotide sequence ID" value="XM_451155.1"/>
</dbReference>
<dbReference type="SMR" id="Q6CY34"/>
<dbReference type="FunCoup" id="Q6CY34">
    <property type="interactions" value="1427"/>
</dbReference>
<dbReference type="STRING" id="284590.Q6CY34"/>
<dbReference type="PaxDb" id="284590-Q6CY34"/>
<dbReference type="KEGG" id="kla:KLLA0_A03531g"/>
<dbReference type="eggNOG" id="KOG2314">
    <property type="taxonomic scope" value="Eukaryota"/>
</dbReference>
<dbReference type="HOGENOM" id="CLU_011152_4_0_1"/>
<dbReference type="InParanoid" id="Q6CY34"/>
<dbReference type="OMA" id="LWGGPQF"/>
<dbReference type="Proteomes" id="UP000000598">
    <property type="component" value="Chromosome A"/>
</dbReference>
<dbReference type="GO" id="GO:0016282">
    <property type="term" value="C:eukaryotic 43S preinitiation complex"/>
    <property type="evidence" value="ECO:0007669"/>
    <property type="project" value="UniProtKB-UniRule"/>
</dbReference>
<dbReference type="GO" id="GO:0033290">
    <property type="term" value="C:eukaryotic 48S preinitiation complex"/>
    <property type="evidence" value="ECO:0007669"/>
    <property type="project" value="UniProtKB-UniRule"/>
</dbReference>
<dbReference type="GO" id="GO:0005852">
    <property type="term" value="C:eukaryotic translation initiation factor 3 complex"/>
    <property type="evidence" value="ECO:0007669"/>
    <property type="project" value="UniProtKB-UniRule"/>
</dbReference>
<dbReference type="GO" id="GO:0003723">
    <property type="term" value="F:RNA binding"/>
    <property type="evidence" value="ECO:0007669"/>
    <property type="project" value="UniProtKB-UniRule"/>
</dbReference>
<dbReference type="GO" id="GO:0003743">
    <property type="term" value="F:translation initiation factor activity"/>
    <property type="evidence" value="ECO:0007669"/>
    <property type="project" value="UniProtKB-UniRule"/>
</dbReference>
<dbReference type="GO" id="GO:0031369">
    <property type="term" value="F:translation initiation factor binding"/>
    <property type="evidence" value="ECO:0007669"/>
    <property type="project" value="InterPro"/>
</dbReference>
<dbReference type="GO" id="GO:0001732">
    <property type="term" value="P:formation of cytoplasmic translation initiation complex"/>
    <property type="evidence" value="ECO:0007669"/>
    <property type="project" value="UniProtKB-UniRule"/>
</dbReference>
<dbReference type="CDD" id="cd12278">
    <property type="entry name" value="RRM_eIF3B"/>
    <property type="match status" value="1"/>
</dbReference>
<dbReference type="Gene3D" id="3.30.70.330">
    <property type="match status" value="1"/>
</dbReference>
<dbReference type="Gene3D" id="2.130.10.10">
    <property type="entry name" value="YVTN repeat-like/Quinoprotein amine dehydrogenase"/>
    <property type="match status" value="1"/>
</dbReference>
<dbReference type="HAMAP" id="MF_03001">
    <property type="entry name" value="eIF3b"/>
    <property type="match status" value="1"/>
</dbReference>
<dbReference type="InterPro" id="IPR011400">
    <property type="entry name" value="EIF3B"/>
</dbReference>
<dbReference type="InterPro" id="IPR034363">
    <property type="entry name" value="eIF3B_RRM"/>
</dbReference>
<dbReference type="InterPro" id="IPR012677">
    <property type="entry name" value="Nucleotide-bd_a/b_plait_sf"/>
</dbReference>
<dbReference type="InterPro" id="IPR035979">
    <property type="entry name" value="RBD_domain_sf"/>
</dbReference>
<dbReference type="InterPro" id="IPR000504">
    <property type="entry name" value="RRM_dom"/>
</dbReference>
<dbReference type="InterPro" id="IPR013979">
    <property type="entry name" value="TIF_beta_prop-like"/>
</dbReference>
<dbReference type="InterPro" id="IPR015943">
    <property type="entry name" value="WD40/YVTN_repeat-like_dom_sf"/>
</dbReference>
<dbReference type="PANTHER" id="PTHR14068">
    <property type="entry name" value="EUKARYOTIC TRANSLATION INITIATION FACTOR 3 EIF3 -RELATED"/>
    <property type="match status" value="1"/>
</dbReference>
<dbReference type="PANTHER" id="PTHR14068:SF0">
    <property type="entry name" value="EUKARYOTIC TRANSLATION INITIATION FACTOR 3 SUBUNIT B"/>
    <property type="match status" value="1"/>
</dbReference>
<dbReference type="Pfam" id="PF08662">
    <property type="entry name" value="eIF2A"/>
    <property type="match status" value="1"/>
</dbReference>
<dbReference type="Pfam" id="PF00076">
    <property type="entry name" value="RRM_1"/>
    <property type="match status" value="1"/>
</dbReference>
<dbReference type="PIRSF" id="PIRSF036424">
    <property type="entry name" value="eIF3b"/>
    <property type="match status" value="1"/>
</dbReference>
<dbReference type="SMART" id="SM00360">
    <property type="entry name" value="RRM"/>
    <property type="match status" value="1"/>
</dbReference>
<dbReference type="SUPFAM" id="SSF82171">
    <property type="entry name" value="DPP6 N-terminal domain-like"/>
    <property type="match status" value="1"/>
</dbReference>
<dbReference type="SUPFAM" id="SSF54928">
    <property type="entry name" value="RNA-binding domain, RBD"/>
    <property type="match status" value="1"/>
</dbReference>
<dbReference type="PROSITE" id="PS50102">
    <property type="entry name" value="RRM"/>
    <property type="match status" value="1"/>
</dbReference>
<protein>
    <recommendedName>
        <fullName evidence="1">Eukaryotic translation initiation factor 3 subunit B</fullName>
        <shortName evidence="1">eIF3b</shortName>
    </recommendedName>
    <alternativeName>
        <fullName evidence="1">Eukaryotic translation initiation factor 3 90 kDa subunit homolog</fullName>
        <shortName evidence="1">eIF3 p90</shortName>
    </alternativeName>
    <alternativeName>
        <fullName>Translation initiation factor eIF3 p90 subunit homolog</fullName>
    </alternativeName>
</protein>
<accession>Q6CY34</accession>
<comment type="function">
    <text evidence="1">RNA-binding component of the eukaryotic translation initiation factor 3 (eIF-3) complex, which is involved in protein synthesis of a specialized repertoire of mRNAs and, together with other initiation factors, stimulates binding of mRNA and methionyl-tRNAi to the 40S ribosome. The eIF-3 complex specifically targets and initiates translation of a subset of mRNAs involved in cell proliferation.</text>
</comment>
<comment type="subunit">
    <text evidence="1">Component of the eukaryotic translation initiation factor 3 (eIF-3) complex.</text>
</comment>
<comment type="subcellular location">
    <subcellularLocation>
        <location evidence="1">Cytoplasm</location>
    </subcellularLocation>
</comment>
<comment type="similarity">
    <text evidence="1">Belongs to the eIF-3 subunit B family.</text>
</comment>
<reference key="1">
    <citation type="journal article" date="2004" name="Nature">
        <title>Genome evolution in yeasts.</title>
        <authorList>
            <person name="Dujon B."/>
            <person name="Sherman D."/>
            <person name="Fischer G."/>
            <person name="Durrens P."/>
            <person name="Casaregola S."/>
            <person name="Lafontaine I."/>
            <person name="de Montigny J."/>
            <person name="Marck C."/>
            <person name="Neuveglise C."/>
            <person name="Talla E."/>
            <person name="Goffard N."/>
            <person name="Frangeul L."/>
            <person name="Aigle M."/>
            <person name="Anthouard V."/>
            <person name="Babour A."/>
            <person name="Barbe V."/>
            <person name="Barnay S."/>
            <person name="Blanchin S."/>
            <person name="Beckerich J.-M."/>
            <person name="Beyne E."/>
            <person name="Bleykasten C."/>
            <person name="Boisrame A."/>
            <person name="Boyer J."/>
            <person name="Cattolico L."/>
            <person name="Confanioleri F."/>
            <person name="de Daruvar A."/>
            <person name="Despons L."/>
            <person name="Fabre E."/>
            <person name="Fairhead C."/>
            <person name="Ferry-Dumazet H."/>
            <person name="Groppi A."/>
            <person name="Hantraye F."/>
            <person name="Hennequin C."/>
            <person name="Jauniaux N."/>
            <person name="Joyet P."/>
            <person name="Kachouri R."/>
            <person name="Kerrest A."/>
            <person name="Koszul R."/>
            <person name="Lemaire M."/>
            <person name="Lesur I."/>
            <person name="Ma L."/>
            <person name="Muller H."/>
            <person name="Nicaud J.-M."/>
            <person name="Nikolski M."/>
            <person name="Oztas S."/>
            <person name="Ozier-Kalogeropoulos O."/>
            <person name="Pellenz S."/>
            <person name="Potier S."/>
            <person name="Richard G.-F."/>
            <person name="Straub M.-L."/>
            <person name="Suleau A."/>
            <person name="Swennen D."/>
            <person name="Tekaia F."/>
            <person name="Wesolowski-Louvel M."/>
            <person name="Westhof E."/>
            <person name="Wirth B."/>
            <person name="Zeniou-Meyer M."/>
            <person name="Zivanovic Y."/>
            <person name="Bolotin-Fukuhara M."/>
            <person name="Thierry A."/>
            <person name="Bouchier C."/>
            <person name="Caudron B."/>
            <person name="Scarpelli C."/>
            <person name="Gaillardin C."/>
            <person name="Weissenbach J."/>
            <person name="Wincker P."/>
            <person name="Souciet J.-L."/>
        </authorList>
    </citation>
    <scope>NUCLEOTIDE SEQUENCE [LARGE SCALE GENOMIC DNA]</scope>
    <source>
        <strain>ATCC 8585 / CBS 2359 / DSM 70799 / NBRC 1267 / NRRL Y-1140 / WM37</strain>
    </source>
</reference>
<evidence type="ECO:0000255" key="1">
    <source>
        <dbReference type="HAMAP-Rule" id="MF_03001"/>
    </source>
</evidence>
<sequence>MTTLESLKIEDIPVDDIDFSDLEREFQIQDGGVNFDNFLVVDGAPVAPEAKVPVLEKVLTKLFSQAGKVLDMQIPVEDGKTKGHLFIEMESVSAAKEAIQLFNGKKLDAKHRLLVNSLNDMEKYGSDDFESQSHEPVVPDFAPTDFLRSWLQNQDGRDQFVLQKGDMTRVFWNRLAHQPDGVGEARKNWSNDVVKFSPKGTYLLSFHDQGVTSWGGPNFDRLKRFFHPDVSRLDVSPTEKFLITFSMNPIKPGEDTPFGPESEGHQICVWDLATGFLMKTFGIPPNAKLQWPLIRFSYDDKYCGRLGPNALAIYDIENNFQLLDGKLHKVEGIQDFSFAPKGVQLTYNRRKSDPTTLLAYWTPETNNQSCKAFLMTLPNKRIVKTVNLVQVSNVSIHWHEQADFVCFQVDRHTKSKKTFFTNLEICKLNESEIPVEKIEMKDRVLELAWEPKGTRFVTISKMDNGGEENPMYPKNFVKFFAPEKKDNKDKDLAVLPDQLKWKLVKTVDQQFANCISWSPAGRFVAVCTIVNGKEIKKASLDFYDFDFTGEKTLNEVQDVKASLQAVAHIDNQFFTDLEWDSSGRFLTAWSSYSKHKLENGYTIYNCCGEAVRKEIVDQFRNFVWRPRPESLLSNAEKKKARKNLKQWSVKFEEQDAMESDSALRDLILKRRAELSAWVSYREQSKERLESEDSYTIFDNFESDKADETQYVTVEEVKEEILEETQEEVESFE</sequence>
<organism>
    <name type="scientific">Kluyveromyces lactis (strain ATCC 8585 / CBS 2359 / DSM 70799 / NBRC 1267 / NRRL Y-1140 / WM37)</name>
    <name type="common">Yeast</name>
    <name type="synonym">Candida sphaerica</name>
    <dbReference type="NCBI Taxonomy" id="284590"/>
    <lineage>
        <taxon>Eukaryota</taxon>
        <taxon>Fungi</taxon>
        <taxon>Dikarya</taxon>
        <taxon>Ascomycota</taxon>
        <taxon>Saccharomycotina</taxon>
        <taxon>Saccharomycetes</taxon>
        <taxon>Saccharomycetales</taxon>
        <taxon>Saccharomycetaceae</taxon>
        <taxon>Kluyveromyces</taxon>
    </lineage>
</organism>
<proteinExistence type="inferred from homology"/>
<feature type="chain" id="PRO_0000363820" description="Eukaryotic translation initiation factor 3 subunit B">
    <location>
        <begin position="1"/>
        <end position="732"/>
    </location>
</feature>
<feature type="domain" description="RRM" evidence="1">
    <location>
        <begin position="37"/>
        <end position="120"/>
    </location>
</feature>
<feature type="repeat" description="WD 1">
    <location>
        <begin position="185"/>
        <end position="224"/>
    </location>
</feature>
<feature type="repeat" description="WD 2">
    <location>
        <begin position="237"/>
        <end position="280"/>
    </location>
</feature>
<feature type="repeat" description="WD 3">
    <location>
        <begin position="439"/>
        <end position="481"/>
    </location>
</feature>
<feature type="repeat" description="WD 4">
    <location>
        <begin position="507"/>
        <end position="554"/>
    </location>
</feature>
<feature type="region of interest" description="Sufficient for interaction with PIC8" evidence="1">
    <location>
        <begin position="1"/>
        <end position="219"/>
    </location>
</feature>
<feature type="region of interest" description="Sufficient for interaction with HCR1 and TIF32" evidence="1">
    <location>
        <begin position="1"/>
        <end position="94"/>
    </location>
</feature>